<organism>
    <name type="scientific">Ginkgo biloba</name>
    <name type="common">Ginkgo</name>
    <name type="synonym">Maidenhair tree</name>
    <dbReference type="NCBI Taxonomy" id="3311"/>
    <lineage>
        <taxon>Eukaryota</taxon>
        <taxon>Viridiplantae</taxon>
        <taxon>Streptophyta</taxon>
        <taxon>Embryophyta</taxon>
        <taxon>Tracheophyta</taxon>
        <taxon>Spermatophyta</taxon>
        <taxon>Ginkgoidae</taxon>
        <taxon>Ginkgoales</taxon>
        <taxon>Ginkgoaceae</taxon>
        <taxon>Ginkgo</taxon>
    </lineage>
</organism>
<gene>
    <name evidence="1" type="primary">psbT</name>
</gene>
<geneLocation type="chloroplast"/>
<keyword id="KW-0150">Chloroplast</keyword>
<keyword id="KW-0472">Membrane</keyword>
<keyword id="KW-0602">Photosynthesis</keyword>
<keyword id="KW-0604">Photosystem II</keyword>
<keyword id="KW-0934">Plastid</keyword>
<keyword id="KW-0793">Thylakoid</keyword>
<keyword id="KW-0812">Transmembrane</keyword>
<keyword id="KW-1133">Transmembrane helix</keyword>
<comment type="function">
    <text evidence="1">Found at the monomer-monomer interface of the photosystem II (PS II) dimer, plays a role in assembly and dimerization of PSII. PSII is a light-driven water plastoquinone oxidoreductase, using light energy to abstract electrons from H(2)O, generating a proton gradient subsequently used for ATP formation.</text>
</comment>
<comment type="subunit">
    <text evidence="1">PSII is composed of 1 copy each of membrane proteins PsbA, PsbB, PsbC, PsbD, PsbE, PsbF, PsbH, PsbI, PsbJ, PsbK, PsbL, PsbM, PsbT, PsbY, PsbZ, Psb30/Ycf12, at least 3 peripheral proteins of the oxygen-evolving complex and a large number of cofactors. It forms dimeric complexes.</text>
</comment>
<comment type="subcellular location">
    <subcellularLocation>
        <location evidence="1">Plastid</location>
        <location evidence="1">Chloroplast thylakoid membrane</location>
        <topology evidence="1">Single-pass membrane protein</topology>
    </subcellularLocation>
</comment>
<comment type="similarity">
    <text evidence="1">Belongs to the PsbT family.</text>
</comment>
<reference key="1">
    <citation type="journal article" date="2000" name="Am. J. Bot.">
        <title>Utility of 17 chloroplast genes for inferring the phylogeny of the basal angiosperms.</title>
        <authorList>
            <person name="Graham S.W."/>
            <person name="Olmstead R.G."/>
        </authorList>
    </citation>
    <scope>NUCLEOTIDE SEQUENCE [GENOMIC DNA]</scope>
</reference>
<evidence type="ECO:0000255" key="1">
    <source>
        <dbReference type="HAMAP-Rule" id="MF_00808"/>
    </source>
</evidence>
<name>PSBT_GINBI</name>
<accession>Q9GF87</accession>
<protein>
    <recommendedName>
        <fullName evidence="1">Photosystem II reaction center protein T</fullName>
        <shortName evidence="1">PSII-T</shortName>
    </recommendedName>
</protein>
<feature type="chain" id="PRO_0000217932" description="Photosystem II reaction center protein T">
    <location>
        <begin position="1"/>
        <end position="35"/>
    </location>
</feature>
<feature type="transmembrane region" description="Helical" evidence="1">
    <location>
        <begin position="3"/>
        <end position="23"/>
    </location>
</feature>
<dbReference type="EMBL" id="AF123851">
    <property type="protein sequence ID" value="AAG26282.1"/>
    <property type="molecule type" value="Genomic_DNA"/>
</dbReference>
<dbReference type="RefSeq" id="YP_005352734.1">
    <property type="nucleotide sequence ID" value="NC_016986.1"/>
</dbReference>
<dbReference type="SMR" id="Q9GF87"/>
<dbReference type="GeneID" id="11935034"/>
<dbReference type="GO" id="GO:0009535">
    <property type="term" value="C:chloroplast thylakoid membrane"/>
    <property type="evidence" value="ECO:0007669"/>
    <property type="project" value="UniProtKB-SubCell"/>
</dbReference>
<dbReference type="GO" id="GO:0009539">
    <property type="term" value="C:photosystem II reaction center"/>
    <property type="evidence" value="ECO:0007669"/>
    <property type="project" value="InterPro"/>
</dbReference>
<dbReference type="GO" id="GO:0015979">
    <property type="term" value="P:photosynthesis"/>
    <property type="evidence" value="ECO:0007669"/>
    <property type="project" value="UniProtKB-UniRule"/>
</dbReference>
<dbReference type="HAMAP" id="MF_00808">
    <property type="entry name" value="PSII_PsbT"/>
    <property type="match status" value="1"/>
</dbReference>
<dbReference type="InterPro" id="IPR001743">
    <property type="entry name" value="PSII_PsbT"/>
</dbReference>
<dbReference type="InterPro" id="IPR037268">
    <property type="entry name" value="PSII_PsbT_sf"/>
</dbReference>
<dbReference type="PANTHER" id="PTHR36411">
    <property type="match status" value="1"/>
</dbReference>
<dbReference type="PANTHER" id="PTHR36411:SF2">
    <property type="entry name" value="PHOTOSYSTEM II REACTION CENTER PROTEIN T"/>
    <property type="match status" value="1"/>
</dbReference>
<dbReference type="Pfam" id="PF01405">
    <property type="entry name" value="PsbT"/>
    <property type="match status" value="1"/>
</dbReference>
<dbReference type="SUPFAM" id="SSF161029">
    <property type="entry name" value="Photosystem II reaction center protein T, PsbT"/>
    <property type="match status" value="1"/>
</dbReference>
<sequence length="35" mass="4031">MEALVYTFLLVSTLGIIFFAIFFRDPPKVPNEGRK</sequence>
<proteinExistence type="inferred from homology"/>